<gene>
    <name evidence="1" type="primary">rsmA</name>
    <name evidence="1" type="synonym">ksgA</name>
    <name type="ordered locus">PP_0401</name>
</gene>
<sequence>MNEQYQHRARKRFGQNFLHDAGIIDRILRAINAKAGEHLLEIGPGQGALTEGLLGSGAQLDVVELDKDLVPILQHKFADRSNFRLHQGDALKFDFNQLGVPPRSLKVVGNLPYNISTPLIFHLLSHAGLIRDMHFMLQKEVVERMAAGPGGGDWGRLSIMVQYHCRVEHLFNVGPGAFNPPPKVDSAIVRLVPHEVLPFPAKDHLLLERVVREAFNQRRKTLRNTMKGLLDSAAIEAAGVDGSLRPEQLDLAAFVRLADQLADQQQA</sequence>
<evidence type="ECO:0000255" key="1">
    <source>
        <dbReference type="HAMAP-Rule" id="MF_00607"/>
    </source>
</evidence>
<organism>
    <name type="scientific">Pseudomonas putida (strain ATCC 47054 / DSM 6125 / CFBP 8728 / NCIMB 11950 / KT2440)</name>
    <dbReference type="NCBI Taxonomy" id="160488"/>
    <lineage>
        <taxon>Bacteria</taxon>
        <taxon>Pseudomonadati</taxon>
        <taxon>Pseudomonadota</taxon>
        <taxon>Gammaproteobacteria</taxon>
        <taxon>Pseudomonadales</taxon>
        <taxon>Pseudomonadaceae</taxon>
        <taxon>Pseudomonas</taxon>
    </lineage>
</organism>
<comment type="function">
    <text evidence="1">Specifically dimethylates two adjacent adenosines (A1518 and A1519) in the loop of a conserved hairpin near the 3'-end of 16S rRNA in the 30S particle. May play a critical role in biogenesis of 30S subunits.</text>
</comment>
<comment type="catalytic activity">
    <reaction evidence="1">
        <text>adenosine(1518)/adenosine(1519) in 16S rRNA + 4 S-adenosyl-L-methionine = N(6)-dimethyladenosine(1518)/N(6)-dimethyladenosine(1519) in 16S rRNA + 4 S-adenosyl-L-homocysteine + 4 H(+)</text>
        <dbReference type="Rhea" id="RHEA:19609"/>
        <dbReference type="Rhea" id="RHEA-COMP:10232"/>
        <dbReference type="Rhea" id="RHEA-COMP:10233"/>
        <dbReference type="ChEBI" id="CHEBI:15378"/>
        <dbReference type="ChEBI" id="CHEBI:57856"/>
        <dbReference type="ChEBI" id="CHEBI:59789"/>
        <dbReference type="ChEBI" id="CHEBI:74411"/>
        <dbReference type="ChEBI" id="CHEBI:74493"/>
        <dbReference type="EC" id="2.1.1.182"/>
    </reaction>
</comment>
<comment type="subcellular location">
    <subcellularLocation>
        <location evidence="1">Cytoplasm</location>
    </subcellularLocation>
</comment>
<comment type="similarity">
    <text evidence="1">Belongs to the class I-like SAM-binding methyltransferase superfamily. rRNA adenine N(6)-methyltransferase family. RsmA subfamily.</text>
</comment>
<protein>
    <recommendedName>
        <fullName evidence="1">Ribosomal RNA small subunit methyltransferase A</fullName>
        <ecNumber evidence="1">2.1.1.182</ecNumber>
    </recommendedName>
    <alternativeName>
        <fullName evidence="1">16S rRNA (adenine(1518)-N(6)/adenine(1519)-N(6))-dimethyltransferase</fullName>
    </alternativeName>
    <alternativeName>
        <fullName evidence="1">16S rRNA dimethyladenosine transferase</fullName>
    </alternativeName>
    <alternativeName>
        <fullName evidence="1">16S rRNA dimethylase</fullName>
    </alternativeName>
    <alternativeName>
        <fullName evidence="1">S-adenosylmethionine-6-N', N'-adenosyl(rRNA) dimethyltransferase</fullName>
    </alternativeName>
</protein>
<name>RSMA_PSEPK</name>
<reference key="1">
    <citation type="journal article" date="2002" name="Environ. Microbiol.">
        <title>Complete genome sequence and comparative analysis of the metabolically versatile Pseudomonas putida KT2440.</title>
        <authorList>
            <person name="Nelson K.E."/>
            <person name="Weinel C."/>
            <person name="Paulsen I.T."/>
            <person name="Dodson R.J."/>
            <person name="Hilbert H."/>
            <person name="Martins dos Santos V.A.P."/>
            <person name="Fouts D.E."/>
            <person name="Gill S.R."/>
            <person name="Pop M."/>
            <person name="Holmes M."/>
            <person name="Brinkac L.M."/>
            <person name="Beanan M.J."/>
            <person name="DeBoy R.T."/>
            <person name="Daugherty S.C."/>
            <person name="Kolonay J.F."/>
            <person name="Madupu R."/>
            <person name="Nelson W.C."/>
            <person name="White O."/>
            <person name="Peterson J.D."/>
            <person name="Khouri H.M."/>
            <person name="Hance I."/>
            <person name="Chris Lee P."/>
            <person name="Holtzapple E.K."/>
            <person name="Scanlan D."/>
            <person name="Tran K."/>
            <person name="Moazzez A."/>
            <person name="Utterback T.R."/>
            <person name="Rizzo M."/>
            <person name="Lee K."/>
            <person name="Kosack D."/>
            <person name="Moestl D."/>
            <person name="Wedler H."/>
            <person name="Lauber J."/>
            <person name="Stjepandic D."/>
            <person name="Hoheisel J."/>
            <person name="Straetz M."/>
            <person name="Heim S."/>
            <person name="Kiewitz C."/>
            <person name="Eisen J.A."/>
            <person name="Timmis K.N."/>
            <person name="Duesterhoeft A."/>
            <person name="Tuemmler B."/>
            <person name="Fraser C.M."/>
        </authorList>
    </citation>
    <scope>NUCLEOTIDE SEQUENCE [LARGE SCALE GENOMIC DNA]</scope>
    <source>
        <strain>ATCC 47054 / DSM 6125 / CFBP 8728 / NCIMB 11950 / KT2440</strain>
    </source>
</reference>
<keyword id="KW-0963">Cytoplasm</keyword>
<keyword id="KW-0489">Methyltransferase</keyword>
<keyword id="KW-1185">Reference proteome</keyword>
<keyword id="KW-0694">RNA-binding</keyword>
<keyword id="KW-0698">rRNA processing</keyword>
<keyword id="KW-0949">S-adenosyl-L-methionine</keyword>
<keyword id="KW-0808">Transferase</keyword>
<dbReference type="EC" id="2.1.1.182" evidence="1"/>
<dbReference type="EMBL" id="AE015451">
    <property type="protein sequence ID" value="AAN66032.1"/>
    <property type="molecule type" value="Genomic_DNA"/>
</dbReference>
<dbReference type="RefSeq" id="NP_742568.1">
    <property type="nucleotide sequence ID" value="NC_002947.4"/>
</dbReference>
<dbReference type="RefSeq" id="WP_003255558.1">
    <property type="nucleotide sequence ID" value="NZ_CP169744.1"/>
</dbReference>
<dbReference type="SMR" id="Q88QT6"/>
<dbReference type="STRING" id="160488.PP_0401"/>
<dbReference type="PaxDb" id="160488-PP_0401"/>
<dbReference type="GeneID" id="83677692"/>
<dbReference type="KEGG" id="ppu:PP_0401"/>
<dbReference type="PATRIC" id="fig|160488.4.peg.431"/>
<dbReference type="eggNOG" id="COG0030">
    <property type="taxonomic scope" value="Bacteria"/>
</dbReference>
<dbReference type="HOGENOM" id="CLU_041220_0_1_6"/>
<dbReference type="OrthoDB" id="9814755at2"/>
<dbReference type="PhylomeDB" id="Q88QT6"/>
<dbReference type="BioCyc" id="PPUT160488:G1G01-438-MONOMER"/>
<dbReference type="Proteomes" id="UP000000556">
    <property type="component" value="Chromosome"/>
</dbReference>
<dbReference type="GO" id="GO:0005829">
    <property type="term" value="C:cytosol"/>
    <property type="evidence" value="ECO:0007669"/>
    <property type="project" value="TreeGrafter"/>
</dbReference>
<dbReference type="GO" id="GO:0052908">
    <property type="term" value="F:16S rRNA (adenine(1518)-N(6)/adenine(1519)-N(6))-dimethyltransferase activity"/>
    <property type="evidence" value="ECO:0007669"/>
    <property type="project" value="UniProtKB-EC"/>
</dbReference>
<dbReference type="GO" id="GO:0003723">
    <property type="term" value="F:RNA binding"/>
    <property type="evidence" value="ECO:0007669"/>
    <property type="project" value="UniProtKB-KW"/>
</dbReference>
<dbReference type="FunFam" id="1.10.8.100:FF:000001">
    <property type="entry name" value="Ribosomal RNA small subunit methyltransferase A"/>
    <property type="match status" value="1"/>
</dbReference>
<dbReference type="Gene3D" id="1.10.8.100">
    <property type="entry name" value="Ribosomal RNA adenine dimethylase-like, domain 2"/>
    <property type="match status" value="1"/>
</dbReference>
<dbReference type="Gene3D" id="3.40.50.150">
    <property type="entry name" value="Vaccinia Virus protein VP39"/>
    <property type="match status" value="1"/>
</dbReference>
<dbReference type="HAMAP" id="MF_00607">
    <property type="entry name" value="16SrRNA_methyltr_A"/>
    <property type="match status" value="1"/>
</dbReference>
<dbReference type="InterPro" id="IPR001737">
    <property type="entry name" value="KsgA/Erm"/>
</dbReference>
<dbReference type="InterPro" id="IPR023165">
    <property type="entry name" value="rRNA_Ade_diMease-like_C"/>
</dbReference>
<dbReference type="InterPro" id="IPR020596">
    <property type="entry name" value="rRNA_Ade_Mease_Trfase_CS"/>
</dbReference>
<dbReference type="InterPro" id="IPR020598">
    <property type="entry name" value="rRNA_Ade_methylase_Trfase_N"/>
</dbReference>
<dbReference type="InterPro" id="IPR011530">
    <property type="entry name" value="rRNA_adenine_dimethylase"/>
</dbReference>
<dbReference type="InterPro" id="IPR029063">
    <property type="entry name" value="SAM-dependent_MTases_sf"/>
</dbReference>
<dbReference type="NCBIfam" id="TIGR00755">
    <property type="entry name" value="ksgA"/>
    <property type="match status" value="1"/>
</dbReference>
<dbReference type="PANTHER" id="PTHR11727">
    <property type="entry name" value="DIMETHYLADENOSINE TRANSFERASE"/>
    <property type="match status" value="1"/>
</dbReference>
<dbReference type="PANTHER" id="PTHR11727:SF7">
    <property type="entry name" value="DIMETHYLADENOSINE TRANSFERASE-RELATED"/>
    <property type="match status" value="1"/>
</dbReference>
<dbReference type="Pfam" id="PF00398">
    <property type="entry name" value="RrnaAD"/>
    <property type="match status" value="1"/>
</dbReference>
<dbReference type="SMART" id="SM00650">
    <property type="entry name" value="rADc"/>
    <property type="match status" value="1"/>
</dbReference>
<dbReference type="SUPFAM" id="SSF53335">
    <property type="entry name" value="S-adenosyl-L-methionine-dependent methyltransferases"/>
    <property type="match status" value="1"/>
</dbReference>
<dbReference type="PROSITE" id="PS01131">
    <property type="entry name" value="RRNA_A_DIMETH"/>
    <property type="match status" value="1"/>
</dbReference>
<dbReference type="PROSITE" id="PS51689">
    <property type="entry name" value="SAM_RNA_A_N6_MT"/>
    <property type="match status" value="1"/>
</dbReference>
<feature type="chain" id="PRO_0000101587" description="Ribosomal RNA small subunit methyltransferase A">
    <location>
        <begin position="1"/>
        <end position="267"/>
    </location>
</feature>
<feature type="binding site" evidence="1">
    <location>
        <position position="16"/>
    </location>
    <ligand>
        <name>S-adenosyl-L-methionine</name>
        <dbReference type="ChEBI" id="CHEBI:59789"/>
    </ligand>
</feature>
<feature type="binding site" evidence="1">
    <location>
        <position position="18"/>
    </location>
    <ligand>
        <name>S-adenosyl-L-methionine</name>
        <dbReference type="ChEBI" id="CHEBI:59789"/>
    </ligand>
</feature>
<feature type="binding site" evidence="1">
    <location>
        <position position="43"/>
    </location>
    <ligand>
        <name>S-adenosyl-L-methionine</name>
        <dbReference type="ChEBI" id="CHEBI:59789"/>
    </ligand>
</feature>
<feature type="binding site" evidence="1">
    <location>
        <position position="64"/>
    </location>
    <ligand>
        <name>S-adenosyl-L-methionine</name>
        <dbReference type="ChEBI" id="CHEBI:59789"/>
    </ligand>
</feature>
<feature type="binding site" evidence="1">
    <location>
        <position position="89"/>
    </location>
    <ligand>
        <name>S-adenosyl-L-methionine</name>
        <dbReference type="ChEBI" id="CHEBI:59789"/>
    </ligand>
</feature>
<feature type="binding site" evidence="1">
    <location>
        <position position="110"/>
    </location>
    <ligand>
        <name>S-adenosyl-L-methionine</name>
        <dbReference type="ChEBI" id="CHEBI:59789"/>
    </ligand>
</feature>
<proteinExistence type="inferred from homology"/>
<accession>Q88QT6</accession>